<proteinExistence type="evidence at protein level"/>
<dbReference type="EC" id="1.17.4.1"/>
<dbReference type="EMBL" id="AF171697">
    <property type="protein sequence ID" value="AAD49743.1"/>
    <property type="molecule type" value="Genomic_DNA"/>
</dbReference>
<dbReference type="EMBL" id="AL390092">
    <property type="protein sequence ID" value="CAB98233.1"/>
    <property type="molecule type" value="Genomic_DNA"/>
</dbReference>
<dbReference type="EMBL" id="CM002237">
    <property type="protein sequence ID" value="EAA27582.1"/>
    <property type="molecule type" value="Genomic_DNA"/>
</dbReference>
<dbReference type="PIR" id="T43711">
    <property type="entry name" value="T43711"/>
</dbReference>
<dbReference type="SMR" id="Q9UW15"/>
<dbReference type="BioGRID" id="1974838">
    <property type="interactions" value="3"/>
</dbReference>
<dbReference type="FunCoup" id="Q9UW15">
    <property type="interactions" value="1204"/>
</dbReference>
<dbReference type="STRING" id="367110.Q9UW15"/>
<dbReference type="PaxDb" id="5141-EFNCRP00000002608"/>
<dbReference type="EnsemblFungi" id="EAA27582">
    <property type="protein sequence ID" value="EAA27582"/>
    <property type="gene ID" value="NCU03539"/>
</dbReference>
<dbReference type="KEGG" id="ncr:NCU03539"/>
<dbReference type="VEuPathDB" id="FungiDB:NCU03539"/>
<dbReference type="HOGENOM" id="CLU_000404_1_2_1"/>
<dbReference type="InParanoid" id="Q9UW15"/>
<dbReference type="OMA" id="IELPQHM"/>
<dbReference type="OrthoDB" id="3000483at2759"/>
<dbReference type="Proteomes" id="UP000001805">
    <property type="component" value="Chromosome 6, Linkage Group II"/>
</dbReference>
<dbReference type="GO" id="GO:0005971">
    <property type="term" value="C:ribonucleoside-diphosphate reductase complex"/>
    <property type="evidence" value="ECO:0000318"/>
    <property type="project" value="GO_Central"/>
</dbReference>
<dbReference type="GO" id="GO:0005524">
    <property type="term" value="F:ATP binding"/>
    <property type="evidence" value="ECO:0000318"/>
    <property type="project" value="GO_Central"/>
</dbReference>
<dbReference type="GO" id="GO:0004748">
    <property type="term" value="F:ribonucleoside-diphosphate reductase activity, thioredoxin disulfide as acceptor"/>
    <property type="evidence" value="ECO:0000250"/>
    <property type="project" value="UniProtKB"/>
</dbReference>
<dbReference type="GO" id="GO:0009263">
    <property type="term" value="P:deoxyribonucleotide biosynthetic process"/>
    <property type="evidence" value="ECO:0000250"/>
    <property type="project" value="UniProtKB"/>
</dbReference>
<dbReference type="CDD" id="cd01679">
    <property type="entry name" value="RNR_I"/>
    <property type="match status" value="1"/>
</dbReference>
<dbReference type="FunFam" id="3.20.70.20:FF:000001">
    <property type="entry name" value="Ribonucleoside-diphosphate reductase"/>
    <property type="match status" value="1"/>
</dbReference>
<dbReference type="Gene3D" id="3.20.70.20">
    <property type="match status" value="1"/>
</dbReference>
<dbReference type="InterPro" id="IPR005144">
    <property type="entry name" value="ATP-cone_dom"/>
</dbReference>
<dbReference type="InterPro" id="IPR013346">
    <property type="entry name" value="NrdE_NrdA_C"/>
</dbReference>
<dbReference type="InterPro" id="IPR000788">
    <property type="entry name" value="RNR_lg_C"/>
</dbReference>
<dbReference type="InterPro" id="IPR013509">
    <property type="entry name" value="RNR_lsu_N"/>
</dbReference>
<dbReference type="InterPro" id="IPR008926">
    <property type="entry name" value="RNR_R1-su_N"/>
</dbReference>
<dbReference type="InterPro" id="IPR039718">
    <property type="entry name" value="Rrm1"/>
</dbReference>
<dbReference type="NCBIfam" id="TIGR02506">
    <property type="entry name" value="NrdE_NrdA"/>
    <property type="match status" value="1"/>
</dbReference>
<dbReference type="PANTHER" id="PTHR11573">
    <property type="entry name" value="RIBONUCLEOSIDE-DIPHOSPHATE REDUCTASE LARGE CHAIN"/>
    <property type="match status" value="1"/>
</dbReference>
<dbReference type="PANTHER" id="PTHR11573:SF6">
    <property type="entry name" value="RIBONUCLEOSIDE-DIPHOSPHATE REDUCTASE LARGE SUBUNIT"/>
    <property type="match status" value="1"/>
</dbReference>
<dbReference type="Pfam" id="PF03477">
    <property type="entry name" value="ATP-cone"/>
    <property type="match status" value="1"/>
</dbReference>
<dbReference type="Pfam" id="PF02867">
    <property type="entry name" value="Ribonuc_red_lgC"/>
    <property type="match status" value="1"/>
</dbReference>
<dbReference type="Pfam" id="PF00317">
    <property type="entry name" value="Ribonuc_red_lgN"/>
    <property type="match status" value="1"/>
</dbReference>
<dbReference type="PRINTS" id="PR01183">
    <property type="entry name" value="RIBORDTASEM1"/>
</dbReference>
<dbReference type="SUPFAM" id="SSF51998">
    <property type="entry name" value="PFL-like glycyl radical enzymes"/>
    <property type="match status" value="1"/>
</dbReference>
<dbReference type="SUPFAM" id="SSF48168">
    <property type="entry name" value="R1 subunit of ribonucleotide reductase, N-terminal domain"/>
    <property type="match status" value="1"/>
</dbReference>
<dbReference type="PROSITE" id="PS51161">
    <property type="entry name" value="ATP_CONE"/>
    <property type="match status" value="1"/>
</dbReference>
<dbReference type="PROSITE" id="PS00089">
    <property type="entry name" value="RIBORED_LARGE"/>
    <property type="match status" value="1"/>
</dbReference>
<name>RIR1_NEUCR</name>
<reference key="1">
    <citation type="journal article" date="2000" name="Mol. Gen. Genet.">
        <title>An osmotic-remedial, temperature-sensitive mutation in the allosteric activity site of ribonucleotide reductase in Neurospora crassa.</title>
        <authorList>
            <person name="Smith M.L."/>
            <person name="Hubbard S.P."/>
            <person name="Jacobson D.J."/>
            <person name="Micali O.C."/>
            <person name="Glass N.L."/>
        </authorList>
    </citation>
    <scope>NUCLEOTIDE SEQUENCE [GENOMIC DNA]</scope>
    <scope>FUNCTION</scope>
    <scope>ENZYME ACTIVITY</scope>
    <scope>MUTAGENESIS OF CYS-26; VAL-124 AND MET-125</scope>
    <source>
        <strain>Oak Ridge</strain>
    </source>
</reference>
<reference key="2">
    <citation type="journal article" date="2003" name="Nucleic Acids Res.">
        <title>What's in the genome of a filamentous fungus? Analysis of the Neurospora genome sequence.</title>
        <authorList>
            <person name="Mannhaupt G."/>
            <person name="Montrone C."/>
            <person name="Haase D."/>
            <person name="Mewes H.-W."/>
            <person name="Aign V."/>
            <person name="Hoheisel J.D."/>
            <person name="Fartmann B."/>
            <person name="Nyakatura G."/>
            <person name="Kempken F."/>
            <person name="Maier J."/>
            <person name="Schulte U."/>
        </authorList>
    </citation>
    <scope>NUCLEOTIDE SEQUENCE [LARGE SCALE GENOMIC DNA]</scope>
    <source>
        <strain>ATCC 24698 / 74-OR23-1A / CBS 708.71 / DSM 1257 / FGSC 987</strain>
    </source>
</reference>
<reference key="3">
    <citation type="journal article" date="2003" name="Nature">
        <title>The genome sequence of the filamentous fungus Neurospora crassa.</title>
        <authorList>
            <person name="Galagan J.E."/>
            <person name="Calvo S.E."/>
            <person name="Borkovich K.A."/>
            <person name="Selker E.U."/>
            <person name="Read N.D."/>
            <person name="Jaffe D.B."/>
            <person name="FitzHugh W."/>
            <person name="Ma L.-J."/>
            <person name="Smirnov S."/>
            <person name="Purcell S."/>
            <person name="Rehman B."/>
            <person name="Elkins T."/>
            <person name="Engels R."/>
            <person name="Wang S."/>
            <person name="Nielsen C.B."/>
            <person name="Butler J."/>
            <person name="Endrizzi M."/>
            <person name="Qui D."/>
            <person name="Ianakiev P."/>
            <person name="Bell-Pedersen D."/>
            <person name="Nelson M.A."/>
            <person name="Werner-Washburne M."/>
            <person name="Selitrennikoff C.P."/>
            <person name="Kinsey J.A."/>
            <person name="Braun E.L."/>
            <person name="Zelter A."/>
            <person name="Schulte U."/>
            <person name="Kothe G.O."/>
            <person name="Jedd G."/>
            <person name="Mewes H.-W."/>
            <person name="Staben C."/>
            <person name="Marcotte E."/>
            <person name="Greenberg D."/>
            <person name="Roy A."/>
            <person name="Foley K."/>
            <person name="Naylor J."/>
            <person name="Stange-Thomann N."/>
            <person name="Barrett R."/>
            <person name="Gnerre S."/>
            <person name="Kamal M."/>
            <person name="Kamvysselis M."/>
            <person name="Mauceli E.W."/>
            <person name="Bielke C."/>
            <person name="Rudd S."/>
            <person name="Frishman D."/>
            <person name="Krystofova S."/>
            <person name="Rasmussen C."/>
            <person name="Metzenberg R.L."/>
            <person name="Perkins D.D."/>
            <person name="Kroken S."/>
            <person name="Cogoni C."/>
            <person name="Macino G."/>
            <person name="Catcheside D.E.A."/>
            <person name="Li W."/>
            <person name="Pratt R.J."/>
            <person name="Osmani S.A."/>
            <person name="DeSouza C.P.C."/>
            <person name="Glass N.L."/>
            <person name="Orbach M.J."/>
            <person name="Berglund J.A."/>
            <person name="Voelker R."/>
            <person name="Yarden O."/>
            <person name="Plamann M."/>
            <person name="Seiler S."/>
            <person name="Dunlap J.C."/>
            <person name="Radford A."/>
            <person name="Aramayo R."/>
            <person name="Natvig D.O."/>
            <person name="Alex L.A."/>
            <person name="Mannhaupt G."/>
            <person name="Ebbole D.J."/>
            <person name="Freitag M."/>
            <person name="Paulsen I."/>
            <person name="Sachs M.S."/>
            <person name="Lander E.S."/>
            <person name="Nusbaum C."/>
            <person name="Birren B.W."/>
        </authorList>
    </citation>
    <scope>NUCLEOTIDE SEQUENCE [LARGE SCALE GENOMIC DNA]</scope>
    <source>
        <strain>ATCC 24698 / 74-OR23-1A / CBS 708.71 / DSM 1257 / FGSC 987</strain>
    </source>
</reference>
<feature type="chain" id="PRO_0000187202" description="Ribonucleoside-diphosphate reductase large chain">
    <location>
        <begin position="1"/>
        <end position="929"/>
    </location>
</feature>
<feature type="domain" description="ATP-cone" evidence="3">
    <location>
        <begin position="1"/>
        <end position="92"/>
    </location>
</feature>
<feature type="region of interest" description="Disordered" evidence="4">
    <location>
        <begin position="789"/>
        <end position="904"/>
    </location>
</feature>
<feature type="compositionally biased region" description="Polar residues" evidence="4">
    <location>
        <begin position="800"/>
        <end position="809"/>
    </location>
</feature>
<feature type="compositionally biased region" description="Basic and acidic residues" evidence="4">
    <location>
        <begin position="868"/>
        <end position="884"/>
    </location>
</feature>
<feature type="compositionally biased region" description="Acidic residues" evidence="4">
    <location>
        <begin position="885"/>
        <end position="894"/>
    </location>
</feature>
<feature type="active site" description="Proton acceptor" evidence="1">
    <location>
        <position position="427"/>
    </location>
</feature>
<feature type="active site" description="Cysteine radical intermediate" evidence="1">
    <location>
        <position position="429"/>
    </location>
</feature>
<feature type="active site" description="Proton acceptor" evidence="1">
    <location>
        <position position="431"/>
    </location>
</feature>
<feature type="binding site" evidence="2">
    <location>
        <begin position="5"/>
        <end position="6"/>
    </location>
    <ligand>
        <name>ATP</name>
        <dbReference type="ChEBI" id="CHEBI:30616"/>
        <note>allosteric activator</note>
    </ligand>
</feature>
<feature type="binding site" evidence="2">
    <location>
        <begin position="11"/>
        <end position="17"/>
    </location>
    <ligand>
        <name>ATP</name>
        <dbReference type="ChEBI" id="CHEBI:30616"/>
        <note>allosteric activator</note>
    </ligand>
</feature>
<feature type="binding site" evidence="2">
    <location>
        <position position="53"/>
    </location>
    <ligand>
        <name>ATP</name>
        <dbReference type="ChEBI" id="CHEBI:30616"/>
        <note>allosteric activator</note>
    </ligand>
</feature>
<feature type="binding site" evidence="2">
    <location>
        <position position="57"/>
    </location>
    <ligand>
        <name>ATP</name>
        <dbReference type="ChEBI" id="CHEBI:30616"/>
        <note>allosteric activator</note>
    </ligand>
</feature>
<feature type="binding site" evidence="2">
    <location>
        <position position="202"/>
    </location>
    <ligand>
        <name>GDP</name>
        <dbReference type="ChEBI" id="CHEBI:58189"/>
    </ligand>
</feature>
<feature type="binding site" evidence="2">
    <location>
        <position position="217"/>
    </location>
    <ligand>
        <name>GDP</name>
        <dbReference type="ChEBI" id="CHEBI:58189"/>
    </ligand>
</feature>
<feature type="binding site" evidence="2">
    <location>
        <begin position="226"/>
        <end position="228"/>
    </location>
    <ligand>
        <name>dTTP</name>
        <dbReference type="ChEBI" id="CHEBI:37568"/>
        <note>allosteric effector that controls substrate specificity</note>
    </ligand>
</feature>
<feature type="binding site" evidence="2">
    <location>
        <position position="243"/>
    </location>
    <ligand>
        <name>dTTP</name>
        <dbReference type="ChEBI" id="CHEBI:37568"/>
        <note>allosteric effector that controls substrate specificity</note>
    </ligand>
</feature>
<feature type="binding site" evidence="2">
    <location>
        <position position="256"/>
    </location>
    <ligand>
        <name>dTTP</name>
        <dbReference type="ChEBI" id="CHEBI:37568"/>
        <note>allosteric effector that controls substrate specificity</note>
    </ligand>
</feature>
<feature type="binding site" evidence="2">
    <location>
        <begin position="263"/>
        <end position="264"/>
    </location>
    <ligand>
        <name>dTTP</name>
        <dbReference type="ChEBI" id="CHEBI:37568"/>
        <note>allosteric effector that controls substrate specificity</note>
    </ligand>
</feature>
<feature type="binding site" evidence="2">
    <location>
        <position position="427"/>
    </location>
    <ligand>
        <name>GDP</name>
        <dbReference type="ChEBI" id="CHEBI:58189"/>
    </ligand>
</feature>
<feature type="binding site" evidence="2">
    <location>
        <position position="431"/>
    </location>
    <ligand>
        <name>GDP</name>
        <dbReference type="ChEBI" id="CHEBI:58189"/>
    </ligand>
</feature>
<feature type="binding site" evidence="2">
    <location>
        <begin position="605"/>
        <end position="608"/>
    </location>
    <ligand>
        <name>GDP</name>
        <dbReference type="ChEBI" id="CHEBI:58189"/>
    </ligand>
</feature>
<feature type="site" description="Important for hydrogen atom transfer" evidence="1">
    <location>
        <position position="218"/>
    </location>
</feature>
<feature type="site" description="Important for hydrogen atom transfer" evidence="1">
    <location>
        <position position="444"/>
    </location>
</feature>
<feature type="site" description="Important for electron transfer" evidence="1">
    <location>
        <position position="738"/>
    </location>
</feature>
<feature type="site" description="Important for electron transfer" evidence="1">
    <location>
        <position position="739"/>
    </location>
</feature>
<feature type="site" description="Interacts with thioredoxin/glutaredoxin" evidence="1">
    <location>
        <position position="924"/>
    </location>
</feature>
<feature type="site" description="Interacts with thioredoxin/glutaredoxin" evidence="1">
    <location>
        <position position="927"/>
    </location>
</feature>
<feature type="disulfide bond" description="Redox-active" evidence="1">
    <location>
        <begin position="218"/>
        <end position="444"/>
    </location>
</feature>
<feature type="mutagenesis site" description="In un-24; temperature-sensitive mutant." evidence="5">
    <original>C</original>
    <variation>Y</variation>
    <location>
        <position position="26"/>
    </location>
</feature>
<feature type="mutagenesis site" description="In un-24; temperature-sensitive mutant." evidence="5">
    <original>V</original>
    <variation>I</variation>
    <location>
        <position position="124"/>
    </location>
</feature>
<feature type="mutagenesis site" description="In un-24; temperature-sensitive mutant." evidence="5">
    <original>M</original>
    <variation>I</variation>
    <location>
        <position position="125"/>
    </location>
</feature>
<feature type="sequence conflict" description="In Ref. 1; AAD49743." evidence="6" ref="1">
    <original>A</original>
    <variation>R</variation>
    <location>
        <position position="912"/>
    </location>
</feature>
<accession>Q9UW15</accession>
<accession>Q7RXZ9</accession>
<accession>Q9P3G2</accession>
<keyword id="KW-0021">Allosteric enzyme</keyword>
<keyword id="KW-0067">ATP-binding</keyword>
<keyword id="KW-0215">Deoxyribonucleotide synthesis</keyword>
<keyword id="KW-1015">Disulfide bond</keyword>
<keyword id="KW-0547">Nucleotide-binding</keyword>
<keyword id="KW-0560">Oxidoreductase</keyword>
<keyword id="KW-1185">Reference proteome</keyword>
<sequence length="929" mass="103804">MYVKKRDGRQERVQFDKITARVSRLCYGLDMNHVDPVAITQKVISGVYGGVTTAQLDDLAAETAAYMTVTHPDYAILAARIAVSNLHKQTKKQWSLVISELYNYVNPRTGKHSPMIAKDVYECVMRHKDEFDSAIVYDRDFNYQYFGFKTLERSYLLKLDGQIAERPQHMIMRVAVGIWGDDVERVIETYNLMSLKTFTHASPTLFNAGTPQPQLSSCFLVDMKEDSIEGIYDTLKTCAMISKMAGGIGLNIHRIRATGSYIAGTNGTSNGIVPMLRVFNNTARYVDQGGNKRPGAFAIYLEPWHADVFEFLDLRKNHGKEEVRARDLFLALWIPDLFMKRVEQNGQWTLMCPHECPGLADVYGDEFEALYEKYEKEGKGRKTVKAQKLWYAILEAQTETGNPFMLYKDACNRKSNQKNLGTIRSSNLCTEIIEYSAPDEVAVCNLASLALSAFIDYENASYDFKKLHEVTQVVVRNLNKIIDINHYPVKEAHNSNMRHRPIGVGVQGLADAFLALRMPFDSDAASKLNIQIFETIYHAALTASCQLAKEQGPYATYEGSPVSQGILQYDMWNVTPTNLWDWTALKADIKKYGVRNSLLLAPMPTASTSQILGNNECFEPYTSNIYQRRVLAGEFQVVNPWLLRDLVEMGLWSDAMKNRIIAEGGSIQNIQSIPNDIKALYKTVWEISQRTIVKMAADRGAFIDQSQSLNIHMREPTMGKITSMHFAGWKMGLKTGMYYLRTQAAAQPIQFTVDQEALRATDDRVAPAHSGLKKRSPPAGTYTSIVLRENTSGPRPYAQTGVSGTSTPIGTRDVPTPASTPPPTEVPETLVQSDNRPRPLVSPAKSAGFKADLPEPESPKALATDPIVKTEDIGSPLLERKEGQNEDVDEDSQERDENIYSNAPLSEQQVAACAWNPGADPSSCEMCSG</sequence>
<organism>
    <name type="scientific">Neurospora crassa (strain ATCC 24698 / 74-OR23-1A / CBS 708.71 / DSM 1257 / FGSC 987)</name>
    <dbReference type="NCBI Taxonomy" id="367110"/>
    <lineage>
        <taxon>Eukaryota</taxon>
        <taxon>Fungi</taxon>
        <taxon>Dikarya</taxon>
        <taxon>Ascomycota</taxon>
        <taxon>Pezizomycotina</taxon>
        <taxon>Sordariomycetes</taxon>
        <taxon>Sordariomycetidae</taxon>
        <taxon>Sordariales</taxon>
        <taxon>Sordariaceae</taxon>
        <taxon>Neurospora</taxon>
    </lineage>
</organism>
<comment type="function">
    <text evidence="5">Provides the precursors necessary for DNA synthesis. Catalyzes the biosynthesis of deoxyribonucleotides from the corresponding ribonucleotides.</text>
</comment>
<comment type="catalytic activity">
    <reaction evidence="5">
        <text>a 2'-deoxyribonucleoside 5'-diphosphate + [thioredoxin]-disulfide + H2O = a ribonucleoside 5'-diphosphate + [thioredoxin]-dithiol</text>
        <dbReference type="Rhea" id="RHEA:23252"/>
        <dbReference type="Rhea" id="RHEA-COMP:10698"/>
        <dbReference type="Rhea" id="RHEA-COMP:10700"/>
        <dbReference type="ChEBI" id="CHEBI:15377"/>
        <dbReference type="ChEBI" id="CHEBI:29950"/>
        <dbReference type="ChEBI" id="CHEBI:50058"/>
        <dbReference type="ChEBI" id="CHEBI:57930"/>
        <dbReference type="ChEBI" id="CHEBI:73316"/>
        <dbReference type="EC" id="1.17.4.1"/>
    </reaction>
</comment>
<comment type="activity regulation">
    <text evidence="1">Under complex allosteric control mediated by deoxynucleoside triphosphates and ATP binding to separate specificity and activation sites on the large subunit. The type of nucleotide bound at the specificity site determines substrate preference. It seems probable that ATP makes the enzyme reduce CDP and UDP, dGTP favors ADP reduction and dTTP favors GDP reduction. Stimulated by ATP and inhibited by dATP binding to the activity site (By similarity).</text>
</comment>
<comment type="similarity">
    <text evidence="6">Belongs to the ribonucleoside diphosphate reductase large chain family.</text>
</comment>
<evidence type="ECO:0000250" key="1"/>
<evidence type="ECO:0000250" key="2">
    <source>
        <dbReference type="UniProtKB" id="P23921"/>
    </source>
</evidence>
<evidence type="ECO:0000255" key="3">
    <source>
        <dbReference type="PROSITE-ProRule" id="PRU00492"/>
    </source>
</evidence>
<evidence type="ECO:0000256" key="4">
    <source>
        <dbReference type="SAM" id="MobiDB-lite"/>
    </source>
</evidence>
<evidence type="ECO:0000269" key="5">
    <source>
    </source>
</evidence>
<evidence type="ECO:0000305" key="6"/>
<gene>
    <name type="primary">rnr-1</name>
    <name type="ORF">B2A19.30</name>
    <name type="ORF">NCU03539</name>
</gene>
<protein>
    <recommendedName>
        <fullName>Ribonucleoside-diphosphate reductase large chain</fullName>
        <ecNumber>1.17.4.1</ecNumber>
    </recommendedName>
    <alternativeName>
        <fullName>Ribonucleotide reductase large subunit</fullName>
    </alternativeName>
</protein>